<evidence type="ECO:0000255" key="1">
    <source>
        <dbReference type="HAMAP-Rule" id="MF_00581"/>
    </source>
</evidence>
<accession>C6DIG9</accession>
<dbReference type="EC" id="6.3.4.5" evidence="1"/>
<dbReference type="EMBL" id="CP001657">
    <property type="protein sequence ID" value="ACT15163.1"/>
    <property type="molecule type" value="Genomic_DNA"/>
</dbReference>
<dbReference type="RefSeq" id="WP_015842235.1">
    <property type="nucleotide sequence ID" value="NC_012917.1"/>
</dbReference>
<dbReference type="SMR" id="C6DIG9"/>
<dbReference type="STRING" id="561230.PC1_4149"/>
<dbReference type="GeneID" id="67796129"/>
<dbReference type="KEGG" id="pct:PC1_4149"/>
<dbReference type="eggNOG" id="COG0137">
    <property type="taxonomic scope" value="Bacteria"/>
</dbReference>
<dbReference type="HOGENOM" id="CLU_032784_4_1_6"/>
<dbReference type="OrthoDB" id="9801641at2"/>
<dbReference type="UniPathway" id="UPA00068">
    <property type="reaction ID" value="UER00113"/>
</dbReference>
<dbReference type="Proteomes" id="UP000002736">
    <property type="component" value="Chromosome"/>
</dbReference>
<dbReference type="GO" id="GO:0005737">
    <property type="term" value="C:cytoplasm"/>
    <property type="evidence" value="ECO:0007669"/>
    <property type="project" value="UniProtKB-SubCell"/>
</dbReference>
<dbReference type="GO" id="GO:0004055">
    <property type="term" value="F:argininosuccinate synthase activity"/>
    <property type="evidence" value="ECO:0007669"/>
    <property type="project" value="UniProtKB-UniRule"/>
</dbReference>
<dbReference type="GO" id="GO:0005524">
    <property type="term" value="F:ATP binding"/>
    <property type="evidence" value="ECO:0007669"/>
    <property type="project" value="UniProtKB-UniRule"/>
</dbReference>
<dbReference type="GO" id="GO:0042803">
    <property type="term" value="F:protein homodimerization activity"/>
    <property type="evidence" value="ECO:0007669"/>
    <property type="project" value="InterPro"/>
</dbReference>
<dbReference type="GO" id="GO:0000053">
    <property type="term" value="P:argininosuccinate metabolic process"/>
    <property type="evidence" value="ECO:0007669"/>
    <property type="project" value="TreeGrafter"/>
</dbReference>
<dbReference type="GO" id="GO:0006526">
    <property type="term" value="P:L-arginine biosynthetic process"/>
    <property type="evidence" value="ECO:0007669"/>
    <property type="project" value="UniProtKB-UniRule"/>
</dbReference>
<dbReference type="GO" id="GO:0000050">
    <property type="term" value="P:urea cycle"/>
    <property type="evidence" value="ECO:0007669"/>
    <property type="project" value="TreeGrafter"/>
</dbReference>
<dbReference type="CDD" id="cd01999">
    <property type="entry name" value="ASS"/>
    <property type="match status" value="1"/>
</dbReference>
<dbReference type="FunFam" id="1.10.287.400:FF:000001">
    <property type="entry name" value="Argininosuccinate synthase"/>
    <property type="match status" value="1"/>
</dbReference>
<dbReference type="Gene3D" id="1.10.287.400">
    <property type="match status" value="1"/>
</dbReference>
<dbReference type="Gene3D" id="3.90.1260.10">
    <property type="entry name" value="Argininosuccinate synthetase, chain A, domain 2"/>
    <property type="match status" value="1"/>
</dbReference>
<dbReference type="Gene3D" id="3.40.50.620">
    <property type="entry name" value="HUPs"/>
    <property type="match status" value="1"/>
</dbReference>
<dbReference type="HAMAP" id="MF_00581">
    <property type="entry name" value="Arg_succ_synth_type2"/>
    <property type="match status" value="1"/>
</dbReference>
<dbReference type="InterPro" id="IPR023437">
    <property type="entry name" value="Arg_succ_synth_type2_subfam"/>
</dbReference>
<dbReference type="InterPro" id="IPR048268">
    <property type="entry name" value="Arginosuc_syn_C"/>
</dbReference>
<dbReference type="InterPro" id="IPR048267">
    <property type="entry name" value="Arginosuc_syn_N"/>
</dbReference>
<dbReference type="InterPro" id="IPR001518">
    <property type="entry name" value="Arginosuc_synth"/>
</dbReference>
<dbReference type="InterPro" id="IPR018223">
    <property type="entry name" value="Arginosuc_synth_CS"/>
</dbReference>
<dbReference type="InterPro" id="IPR023434">
    <property type="entry name" value="Arginosuc_synth_type_1_subfam"/>
</dbReference>
<dbReference type="InterPro" id="IPR024074">
    <property type="entry name" value="AS_cat/multimer_dom_body"/>
</dbReference>
<dbReference type="InterPro" id="IPR024073">
    <property type="entry name" value="AS_multimer_C_tail"/>
</dbReference>
<dbReference type="InterPro" id="IPR014729">
    <property type="entry name" value="Rossmann-like_a/b/a_fold"/>
</dbReference>
<dbReference type="NCBIfam" id="TIGR00032">
    <property type="entry name" value="argG"/>
    <property type="match status" value="1"/>
</dbReference>
<dbReference type="NCBIfam" id="NF003779">
    <property type="entry name" value="PRK05370.1"/>
    <property type="match status" value="1"/>
</dbReference>
<dbReference type="PANTHER" id="PTHR11587">
    <property type="entry name" value="ARGININOSUCCINATE SYNTHASE"/>
    <property type="match status" value="1"/>
</dbReference>
<dbReference type="PANTHER" id="PTHR11587:SF2">
    <property type="entry name" value="ARGININOSUCCINATE SYNTHASE"/>
    <property type="match status" value="1"/>
</dbReference>
<dbReference type="Pfam" id="PF20979">
    <property type="entry name" value="Arginosuc_syn_C"/>
    <property type="match status" value="1"/>
</dbReference>
<dbReference type="Pfam" id="PF00764">
    <property type="entry name" value="Arginosuc_synth"/>
    <property type="match status" value="1"/>
</dbReference>
<dbReference type="SUPFAM" id="SSF52402">
    <property type="entry name" value="Adenine nucleotide alpha hydrolases-like"/>
    <property type="match status" value="1"/>
</dbReference>
<dbReference type="SUPFAM" id="SSF69864">
    <property type="entry name" value="Argininosuccinate synthetase, C-terminal domain"/>
    <property type="match status" value="1"/>
</dbReference>
<dbReference type="PROSITE" id="PS00564">
    <property type="entry name" value="ARGININOSUCCIN_SYN_1"/>
    <property type="match status" value="1"/>
</dbReference>
<dbReference type="PROSITE" id="PS00565">
    <property type="entry name" value="ARGININOSUCCIN_SYN_2"/>
    <property type="match status" value="1"/>
</dbReference>
<sequence>MTTILKHLPVGQRIGIAFSGGLDTSAALLWMRQKGAVPYAYTANLGQPDEDDYEEIPRRAMEYGAENARLIDCRKQLVAEGIAAIQCGAFHNTTAGVTYFNTTPLGRAVTGTMLVAAMKEDGVNIWGDGSTYKGNDIERFYRYGLLTNAELKIYKPWLDTDFIDELGGRQEMSEFMSQAGFGYKMSAEKAYSTDSNILGATHEAKDLEFLNSSVKIVNPIMGVKFWDENVKVPAEEVTIRFERGHPVALNGKTFADDVELMLEANRIGGRHGLGMSDQIENRIIEAKSRGIYEAPGMALLHIAYERLVTGIHNEDTIEQYHANGRQLGRFLYQGRWFDSQALMLRDASQRWIASAITGEVTLELRRGNDYSIMNTVSDNLTYKPERLTMEKGDSVFSPDDRIGQLTMRNLDITDTREKLFNYVETGLLSSSASTGLPQVGQLQDKTEK</sequence>
<reference key="1">
    <citation type="submission" date="2009-07" db="EMBL/GenBank/DDBJ databases">
        <title>Complete sequence of Pectobacterium carotovorum subsp. carotovorum PC1.</title>
        <authorList>
            <consortium name="US DOE Joint Genome Institute"/>
            <person name="Lucas S."/>
            <person name="Copeland A."/>
            <person name="Lapidus A."/>
            <person name="Glavina del Rio T."/>
            <person name="Tice H."/>
            <person name="Bruce D."/>
            <person name="Goodwin L."/>
            <person name="Pitluck S."/>
            <person name="Munk A.C."/>
            <person name="Brettin T."/>
            <person name="Detter J.C."/>
            <person name="Han C."/>
            <person name="Tapia R."/>
            <person name="Larimer F."/>
            <person name="Land M."/>
            <person name="Hauser L."/>
            <person name="Kyrpides N."/>
            <person name="Mikhailova N."/>
            <person name="Balakrishnan V."/>
            <person name="Glasner J."/>
            <person name="Perna N.T."/>
        </authorList>
    </citation>
    <scope>NUCLEOTIDE SEQUENCE [LARGE SCALE GENOMIC DNA]</scope>
    <source>
        <strain>PC1</strain>
    </source>
</reference>
<comment type="catalytic activity">
    <reaction evidence="1">
        <text>L-citrulline + L-aspartate + ATP = 2-(N(omega)-L-arginino)succinate + AMP + diphosphate + H(+)</text>
        <dbReference type="Rhea" id="RHEA:10932"/>
        <dbReference type="ChEBI" id="CHEBI:15378"/>
        <dbReference type="ChEBI" id="CHEBI:29991"/>
        <dbReference type="ChEBI" id="CHEBI:30616"/>
        <dbReference type="ChEBI" id="CHEBI:33019"/>
        <dbReference type="ChEBI" id="CHEBI:57472"/>
        <dbReference type="ChEBI" id="CHEBI:57743"/>
        <dbReference type="ChEBI" id="CHEBI:456215"/>
        <dbReference type="EC" id="6.3.4.5"/>
    </reaction>
</comment>
<comment type="pathway">
    <text evidence="1">Amino-acid biosynthesis; L-arginine biosynthesis; L-arginine from L-ornithine and carbamoyl phosphate: step 2/3.</text>
</comment>
<comment type="subunit">
    <text evidence="1">Homotetramer.</text>
</comment>
<comment type="subcellular location">
    <subcellularLocation>
        <location evidence="1">Cytoplasm</location>
    </subcellularLocation>
</comment>
<comment type="similarity">
    <text evidence="1">Belongs to the argininosuccinate synthase family. Type 2 subfamily.</text>
</comment>
<proteinExistence type="inferred from homology"/>
<feature type="chain" id="PRO_1000212131" description="Argininosuccinate synthase">
    <location>
        <begin position="1"/>
        <end position="448"/>
    </location>
</feature>
<feature type="binding site" evidence="1">
    <location>
        <begin position="17"/>
        <end position="25"/>
    </location>
    <ligand>
        <name>ATP</name>
        <dbReference type="ChEBI" id="CHEBI:30616"/>
    </ligand>
</feature>
<feature type="binding site" evidence="1">
    <location>
        <position position="43"/>
    </location>
    <ligand>
        <name>ATP</name>
        <dbReference type="ChEBI" id="CHEBI:30616"/>
    </ligand>
</feature>
<feature type="binding site" evidence="1">
    <location>
        <position position="99"/>
    </location>
    <ligand>
        <name>L-citrulline</name>
        <dbReference type="ChEBI" id="CHEBI:57743"/>
    </ligand>
</feature>
<feature type="binding site" evidence="1">
    <location>
        <position position="129"/>
    </location>
    <ligand>
        <name>ATP</name>
        <dbReference type="ChEBI" id="CHEBI:30616"/>
    </ligand>
</feature>
<feature type="binding site" evidence="1">
    <location>
        <position position="131"/>
    </location>
    <ligand>
        <name>ATP</name>
        <dbReference type="ChEBI" id="CHEBI:30616"/>
    </ligand>
</feature>
<feature type="binding site" evidence="1">
    <location>
        <position position="131"/>
    </location>
    <ligand>
        <name>L-aspartate</name>
        <dbReference type="ChEBI" id="CHEBI:29991"/>
    </ligand>
</feature>
<feature type="binding site" evidence="1">
    <location>
        <position position="135"/>
    </location>
    <ligand>
        <name>L-aspartate</name>
        <dbReference type="ChEBI" id="CHEBI:29991"/>
    </ligand>
</feature>
<feature type="binding site" evidence="1">
    <location>
        <position position="135"/>
    </location>
    <ligand>
        <name>L-citrulline</name>
        <dbReference type="ChEBI" id="CHEBI:57743"/>
    </ligand>
</feature>
<feature type="binding site" evidence="1">
    <location>
        <position position="136"/>
    </location>
    <ligand>
        <name>ATP</name>
        <dbReference type="ChEBI" id="CHEBI:30616"/>
    </ligand>
</feature>
<feature type="binding site" evidence="1">
    <location>
        <position position="136"/>
    </location>
    <ligand>
        <name>L-aspartate</name>
        <dbReference type="ChEBI" id="CHEBI:29991"/>
    </ligand>
</feature>
<feature type="binding site" evidence="1">
    <location>
        <position position="139"/>
    </location>
    <ligand>
        <name>L-citrulline</name>
        <dbReference type="ChEBI" id="CHEBI:57743"/>
    </ligand>
</feature>
<feature type="binding site" evidence="1">
    <location>
        <position position="192"/>
    </location>
    <ligand>
        <name>L-citrulline</name>
        <dbReference type="ChEBI" id="CHEBI:57743"/>
    </ligand>
</feature>
<feature type="binding site" evidence="1">
    <location>
        <position position="194"/>
    </location>
    <ligand>
        <name>ATP</name>
        <dbReference type="ChEBI" id="CHEBI:30616"/>
    </ligand>
</feature>
<feature type="binding site" evidence="1">
    <location>
        <position position="201"/>
    </location>
    <ligand>
        <name>L-citrulline</name>
        <dbReference type="ChEBI" id="CHEBI:57743"/>
    </ligand>
</feature>
<feature type="binding site" evidence="1">
    <location>
        <position position="203"/>
    </location>
    <ligand>
        <name>L-citrulline</name>
        <dbReference type="ChEBI" id="CHEBI:57743"/>
    </ligand>
</feature>
<feature type="binding site" evidence="1">
    <location>
        <position position="280"/>
    </location>
    <ligand>
        <name>L-citrulline</name>
        <dbReference type="ChEBI" id="CHEBI:57743"/>
    </ligand>
</feature>
<name>ASSY_PECCP</name>
<gene>
    <name evidence="1" type="primary">argG</name>
    <name type="ordered locus">PC1_4149</name>
</gene>
<organism>
    <name type="scientific">Pectobacterium carotovorum subsp. carotovorum (strain PC1)</name>
    <dbReference type="NCBI Taxonomy" id="561230"/>
    <lineage>
        <taxon>Bacteria</taxon>
        <taxon>Pseudomonadati</taxon>
        <taxon>Pseudomonadota</taxon>
        <taxon>Gammaproteobacteria</taxon>
        <taxon>Enterobacterales</taxon>
        <taxon>Pectobacteriaceae</taxon>
        <taxon>Pectobacterium</taxon>
    </lineage>
</organism>
<keyword id="KW-0028">Amino-acid biosynthesis</keyword>
<keyword id="KW-0055">Arginine biosynthesis</keyword>
<keyword id="KW-0067">ATP-binding</keyword>
<keyword id="KW-0963">Cytoplasm</keyword>
<keyword id="KW-0436">Ligase</keyword>
<keyword id="KW-0547">Nucleotide-binding</keyword>
<protein>
    <recommendedName>
        <fullName evidence="1">Argininosuccinate synthase</fullName>
        <ecNumber evidence="1">6.3.4.5</ecNumber>
    </recommendedName>
    <alternativeName>
        <fullName evidence="1">Citrulline--aspartate ligase</fullName>
    </alternativeName>
</protein>